<sequence>MKTMDKRILLRALESEIERTTGCTDPGAVCLAVRAAAIELGVDPEKIVVTVSPNIYKNGINVGVPGTGMRGLHIAAGLGAVIKSTSSGLALLDAVDPADVERAVQLVNNGRVTITHAETTSALYIKAEVFSGAHYAHAVIRDDYTSIVEVGLDGKKVSSPRGMPVKTKHESLKGYTLEELFTSIDTMTVEELTFLRDAAEVNRKAAEAGLESGPCPLGKALYSGLAGAGVRHMAAARAQALTAAACEARMSGMQVPIIAIAGSGNHGIASFLGILAVAETLASPEEKLLKALAISSTVTVAIKEHSTKLSAFCGCAVAASTGVAAGTVYLLGGSYEEITHAMQSVIGTLAGMVCDGAKESCAFKLSSSVALAIQFGHLSLEDAYIKEGMGIVSQSIEKTFENLGRLNNPGMVTADKLMLQMISGH</sequence>
<keyword id="KW-1185">Reference proteome</keyword>
<comment type="similarity">
    <text evidence="1">Belongs to the UPF0597 family.</text>
</comment>
<evidence type="ECO:0000255" key="1">
    <source>
        <dbReference type="HAMAP-Rule" id="MF_01845"/>
    </source>
</evidence>
<dbReference type="EMBL" id="AM114193">
    <property type="protein sequence ID" value="CAJ36579.1"/>
    <property type="molecule type" value="Genomic_DNA"/>
</dbReference>
<dbReference type="KEGG" id="rci:RCIX1285"/>
<dbReference type="PATRIC" id="fig|351160.9.peg.1678"/>
<dbReference type="eggNOG" id="arCOG05065">
    <property type="taxonomic scope" value="Archaea"/>
</dbReference>
<dbReference type="Proteomes" id="UP000000663">
    <property type="component" value="Chromosome"/>
</dbReference>
<dbReference type="GO" id="GO:0080146">
    <property type="term" value="F:L-cysteine desulfhydrase activity"/>
    <property type="evidence" value="ECO:0007669"/>
    <property type="project" value="TreeGrafter"/>
</dbReference>
<dbReference type="GO" id="GO:0019450">
    <property type="term" value="P:L-cysteine catabolic process to pyruvate"/>
    <property type="evidence" value="ECO:0007669"/>
    <property type="project" value="TreeGrafter"/>
</dbReference>
<dbReference type="HAMAP" id="MF_01845">
    <property type="entry name" value="UPF0597"/>
    <property type="match status" value="1"/>
</dbReference>
<dbReference type="InterPro" id="IPR005130">
    <property type="entry name" value="Ser_deHydtase-like_asu"/>
</dbReference>
<dbReference type="InterPro" id="IPR021144">
    <property type="entry name" value="UPF0597"/>
</dbReference>
<dbReference type="PANTHER" id="PTHR30501">
    <property type="entry name" value="UPF0597 PROTEIN YHAM"/>
    <property type="match status" value="1"/>
</dbReference>
<dbReference type="PANTHER" id="PTHR30501:SF2">
    <property type="entry name" value="UPF0597 PROTEIN YHAM"/>
    <property type="match status" value="1"/>
</dbReference>
<dbReference type="Pfam" id="PF03313">
    <property type="entry name" value="SDH_alpha"/>
    <property type="match status" value="1"/>
</dbReference>
<dbReference type="PIRSF" id="PIRSF006054">
    <property type="entry name" value="UCP006054"/>
    <property type="match status" value="1"/>
</dbReference>
<protein>
    <recommendedName>
        <fullName evidence="1">UPF0597 protein UNCMA_16400</fullName>
    </recommendedName>
</protein>
<gene>
    <name type="ordered locus">UNCMA_16400</name>
    <name type="ORF">RCIX1285</name>
</gene>
<reference key="1">
    <citation type="journal article" date="2006" name="Science">
        <title>Genome of rice cluster I archaea -- the key methane producers in the rice rhizosphere.</title>
        <authorList>
            <person name="Erkel C."/>
            <person name="Kube M."/>
            <person name="Reinhardt R."/>
            <person name="Liesack W."/>
        </authorList>
    </citation>
    <scope>NUCLEOTIDE SEQUENCE [LARGE SCALE GENOMIC DNA]</scope>
    <source>
        <strain>DSM 22066 / NBRC 105507 / MRE50</strain>
    </source>
</reference>
<feature type="chain" id="PRO_0000339872" description="UPF0597 protein UNCMA_16400">
    <location>
        <begin position="1"/>
        <end position="425"/>
    </location>
</feature>
<name>Y1640_METAR</name>
<organism>
    <name type="scientific">Methanocella arvoryzae (strain DSM 22066 / NBRC 105507 / MRE50)</name>
    <dbReference type="NCBI Taxonomy" id="351160"/>
    <lineage>
        <taxon>Archaea</taxon>
        <taxon>Methanobacteriati</taxon>
        <taxon>Methanobacteriota</taxon>
        <taxon>Stenosarchaea group</taxon>
        <taxon>Methanomicrobia</taxon>
        <taxon>Methanocellales</taxon>
        <taxon>Methanocellaceae</taxon>
        <taxon>Methanocella</taxon>
    </lineage>
</organism>
<proteinExistence type="inferred from homology"/>
<accession>Q0W4W4</accession>